<gene>
    <name evidence="1" type="primary">rplA</name>
    <name type="ordered locus">Swit_2564</name>
</gene>
<organism>
    <name type="scientific">Rhizorhabdus wittichii (strain DSM 6014 / CCUG 31198 / JCM 15750 / NBRC 105917 / EY 4224 / RW1)</name>
    <name type="common">Sphingomonas wittichii</name>
    <dbReference type="NCBI Taxonomy" id="392499"/>
    <lineage>
        <taxon>Bacteria</taxon>
        <taxon>Pseudomonadati</taxon>
        <taxon>Pseudomonadota</taxon>
        <taxon>Alphaproteobacteria</taxon>
        <taxon>Sphingomonadales</taxon>
        <taxon>Sphingomonadaceae</taxon>
        <taxon>Rhizorhabdus</taxon>
    </lineage>
</organism>
<sequence length="232" mass="23986">MAKLSKKQKNQAASVDSQKLYGVDEAIALAKQNATSKFDETIEVALNLGVDPRHADQMVRGVVTLPKGTGKDVRVGVFARGAKADEAKAAGAEVVGAEDLLETIQGGTVDFDRCIATPDMMGLVGRLGKILGPKGLMPNPKLGTVTMNVAEAVKAAKGGQVEFRVEKAGIIHSGIGKASFPAEDLRANFDAFVDAIVKAKPTGAKGKYLKKAAVSSTMGPGVKIDVADVAGA</sequence>
<keyword id="KW-1185">Reference proteome</keyword>
<keyword id="KW-0678">Repressor</keyword>
<keyword id="KW-0687">Ribonucleoprotein</keyword>
<keyword id="KW-0689">Ribosomal protein</keyword>
<keyword id="KW-0694">RNA-binding</keyword>
<keyword id="KW-0699">rRNA-binding</keyword>
<keyword id="KW-0810">Translation regulation</keyword>
<keyword id="KW-0820">tRNA-binding</keyword>
<name>RL1_RHIWR</name>
<comment type="function">
    <text evidence="1">Binds directly to 23S rRNA. The L1 stalk is quite mobile in the ribosome, and is involved in E site tRNA release.</text>
</comment>
<comment type="function">
    <text evidence="1">Protein L1 is also a translational repressor protein, it controls the translation of the L11 operon by binding to its mRNA.</text>
</comment>
<comment type="subunit">
    <text evidence="1">Part of the 50S ribosomal subunit.</text>
</comment>
<comment type="similarity">
    <text evidence="1">Belongs to the universal ribosomal protein uL1 family.</text>
</comment>
<accession>A5V9F6</accession>
<proteinExistence type="inferred from homology"/>
<reference key="1">
    <citation type="journal article" date="2010" name="J. Bacteriol.">
        <title>Genome sequence of the dioxin-mineralizing bacterium Sphingomonas wittichii RW1.</title>
        <authorList>
            <person name="Miller T.R."/>
            <person name="Delcher A.L."/>
            <person name="Salzberg S.L."/>
            <person name="Saunders E."/>
            <person name="Detter J.C."/>
            <person name="Halden R.U."/>
        </authorList>
    </citation>
    <scope>NUCLEOTIDE SEQUENCE [LARGE SCALE GENOMIC DNA]</scope>
    <source>
        <strain>DSM 6014 / CCUG 31198 / JCM 15750 / NBRC 105917 / EY 4224 / RW1</strain>
    </source>
</reference>
<protein>
    <recommendedName>
        <fullName evidence="1">Large ribosomal subunit protein uL1</fullName>
    </recommendedName>
    <alternativeName>
        <fullName evidence="2">50S ribosomal protein L1</fullName>
    </alternativeName>
</protein>
<dbReference type="EMBL" id="CP000699">
    <property type="protein sequence ID" value="ABQ68922.1"/>
    <property type="molecule type" value="Genomic_DNA"/>
</dbReference>
<dbReference type="SMR" id="A5V9F6"/>
<dbReference type="STRING" id="392499.Swit_2564"/>
<dbReference type="PaxDb" id="392499-Swit_2564"/>
<dbReference type="KEGG" id="swi:Swit_2564"/>
<dbReference type="eggNOG" id="COG0081">
    <property type="taxonomic scope" value="Bacteria"/>
</dbReference>
<dbReference type="HOGENOM" id="CLU_062853_0_0_5"/>
<dbReference type="OrthoDB" id="9803740at2"/>
<dbReference type="Proteomes" id="UP000001989">
    <property type="component" value="Chromosome"/>
</dbReference>
<dbReference type="GO" id="GO:0022625">
    <property type="term" value="C:cytosolic large ribosomal subunit"/>
    <property type="evidence" value="ECO:0007669"/>
    <property type="project" value="TreeGrafter"/>
</dbReference>
<dbReference type="GO" id="GO:0019843">
    <property type="term" value="F:rRNA binding"/>
    <property type="evidence" value="ECO:0007669"/>
    <property type="project" value="UniProtKB-UniRule"/>
</dbReference>
<dbReference type="GO" id="GO:0003735">
    <property type="term" value="F:structural constituent of ribosome"/>
    <property type="evidence" value="ECO:0007669"/>
    <property type="project" value="InterPro"/>
</dbReference>
<dbReference type="GO" id="GO:0000049">
    <property type="term" value="F:tRNA binding"/>
    <property type="evidence" value="ECO:0007669"/>
    <property type="project" value="UniProtKB-KW"/>
</dbReference>
<dbReference type="GO" id="GO:0006417">
    <property type="term" value="P:regulation of translation"/>
    <property type="evidence" value="ECO:0007669"/>
    <property type="project" value="UniProtKB-KW"/>
</dbReference>
<dbReference type="GO" id="GO:0006412">
    <property type="term" value="P:translation"/>
    <property type="evidence" value="ECO:0007669"/>
    <property type="project" value="UniProtKB-UniRule"/>
</dbReference>
<dbReference type="CDD" id="cd00403">
    <property type="entry name" value="Ribosomal_L1"/>
    <property type="match status" value="1"/>
</dbReference>
<dbReference type="FunFam" id="3.40.50.790:FF:000001">
    <property type="entry name" value="50S ribosomal protein L1"/>
    <property type="match status" value="1"/>
</dbReference>
<dbReference type="Gene3D" id="3.30.190.20">
    <property type="match status" value="1"/>
</dbReference>
<dbReference type="Gene3D" id="3.40.50.790">
    <property type="match status" value="1"/>
</dbReference>
<dbReference type="HAMAP" id="MF_01318_B">
    <property type="entry name" value="Ribosomal_uL1_B"/>
    <property type="match status" value="1"/>
</dbReference>
<dbReference type="InterPro" id="IPR005878">
    <property type="entry name" value="Ribosom_uL1_bac-type"/>
</dbReference>
<dbReference type="InterPro" id="IPR002143">
    <property type="entry name" value="Ribosomal_uL1"/>
</dbReference>
<dbReference type="InterPro" id="IPR023674">
    <property type="entry name" value="Ribosomal_uL1-like"/>
</dbReference>
<dbReference type="InterPro" id="IPR028364">
    <property type="entry name" value="Ribosomal_uL1/biogenesis"/>
</dbReference>
<dbReference type="InterPro" id="IPR016095">
    <property type="entry name" value="Ribosomal_uL1_3-a/b-sand"/>
</dbReference>
<dbReference type="InterPro" id="IPR023673">
    <property type="entry name" value="Ribosomal_uL1_CS"/>
</dbReference>
<dbReference type="NCBIfam" id="TIGR01169">
    <property type="entry name" value="rplA_bact"/>
    <property type="match status" value="1"/>
</dbReference>
<dbReference type="PANTHER" id="PTHR36427">
    <property type="entry name" value="54S RIBOSOMAL PROTEIN L1, MITOCHONDRIAL"/>
    <property type="match status" value="1"/>
</dbReference>
<dbReference type="PANTHER" id="PTHR36427:SF3">
    <property type="entry name" value="LARGE RIBOSOMAL SUBUNIT PROTEIN UL1M"/>
    <property type="match status" value="1"/>
</dbReference>
<dbReference type="Pfam" id="PF00687">
    <property type="entry name" value="Ribosomal_L1"/>
    <property type="match status" value="1"/>
</dbReference>
<dbReference type="PIRSF" id="PIRSF002155">
    <property type="entry name" value="Ribosomal_L1"/>
    <property type="match status" value="1"/>
</dbReference>
<dbReference type="SUPFAM" id="SSF56808">
    <property type="entry name" value="Ribosomal protein L1"/>
    <property type="match status" value="1"/>
</dbReference>
<dbReference type="PROSITE" id="PS01199">
    <property type="entry name" value="RIBOSOMAL_L1"/>
    <property type="match status" value="1"/>
</dbReference>
<feature type="chain" id="PRO_1000051924" description="Large ribosomal subunit protein uL1">
    <location>
        <begin position="1"/>
        <end position="232"/>
    </location>
</feature>
<evidence type="ECO:0000255" key="1">
    <source>
        <dbReference type="HAMAP-Rule" id="MF_01318"/>
    </source>
</evidence>
<evidence type="ECO:0000305" key="2"/>